<gene>
    <name evidence="3" type="primary">AT9</name>
    <name evidence="4" type="ORF">CEY00_Acc27825</name>
</gene>
<feature type="chain" id="PRO_0000451704" description="Alcohol acyltransferase 9">
    <location>
        <begin position="1"/>
        <end position="432"/>
    </location>
</feature>
<feature type="active site" description="Proton acceptor" evidence="2">
    <location>
        <position position="156"/>
    </location>
</feature>
<feature type="active site" description="Proton acceptor" evidence="2">
    <location>
        <position position="379"/>
    </location>
</feature>
<name>AT9_ACTCC</name>
<dbReference type="EC" id="2.3.1.268" evidence="1"/>
<dbReference type="EMBL" id="NKQK01000024">
    <property type="protein sequence ID" value="PSR93215.1"/>
    <property type="molecule type" value="Genomic_DNA"/>
</dbReference>
<dbReference type="SMR" id="A0A2R6PLK2"/>
<dbReference type="FunCoup" id="A0A2R6PLK2">
    <property type="interactions" value="1"/>
</dbReference>
<dbReference type="STRING" id="1590841.A0A2R6PLK2"/>
<dbReference type="EnsemblPlants" id="PSR93215">
    <property type="protein sequence ID" value="PSR93215"/>
    <property type="gene ID" value="CEY00_Acc27825"/>
</dbReference>
<dbReference type="Gramene" id="PSR93215">
    <property type="protein sequence ID" value="PSR93215"/>
    <property type="gene ID" value="CEY00_Acc27825"/>
</dbReference>
<dbReference type="InParanoid" id="A0A2R6PLK2"/>
<dbReference type="OMA" id="VWDRHLM"/>
<dbReference type="OrthoDB" id="1862401at2759"/>
<dbReference type="Proteomes" id="UP000241394">
    <property type="component" value="Chromosome LG24"/>
</dbReference>
<dbReference type="GO" id="GO:0016746">
    <property type="term" value="F:acyltransferase activity"/>
    <property type="evidence" value="ECO:0000250"/>
    <property type="project" value="UniProtKB"/>
</dbReference>
<dbReference type="GO" id="GO:0006066">
    <property type="term" value="P:alcohol metabolic process"/>
    <property type="evidence" value="ECO:0000250"/>
    <property type="project" value="UniProtKB"/>
</dbReference>
<dbReference type="GO" id="GO:0009836">
    <property type="term" value="P:fruit ripening, climacteric"/>
    <property type="evidence" value="ECO:0000250"/>
    <property type="project" value="UniProtKB"/>
</dbReference>
<dbReference type="GO" id="GO:0009723">
    <property type="term" value="P:response to ethylene"/>
    <property type="evidence" value="ECO:0000250"/>
    <property type="project" value="UniProtKB"/>
</dbReference>
<dbReference type="Gene3D" id="3.30.559.10">
    <property type="entry name" value="Chloramphenicol acetyltransferase-like domain"/>
    <property type="match status" value="2"/>
</dbReference>
<dbReference type="InterPro" id="IPR023213">
    <property type="entry name" value="CAT-like_dom_sf"/>
</dbReference>
<dbReference type="InterPro" id="IPR050898">
    <property type="entry name" value="Plant_acyltransferase"/>
</dbReference>
<dbReference type="PANTHER" id="PTHR31147">
    <property type="entry name" value="ACYL TRANSFERASE 4"/>
    <property type="match status" value="1"/>
</dbReference>
<dbReference type="PANTHER" id="PTHR31147:SF1">
    <property type="entry name" value="ACYL TRANSFERASE 4"/>
    <property type="match status" value="1"/>
</dbReference>
<dbReference type="Pfam" id="PF02458">
    <property type="entry name" value="Transferase"/>
    <property type="match status" value="1"/>
</dbReference>
<accession>A0A2R6PLK2</accession>
<organism>
    <name type="scientific">Actinidia chinensis var. chinensis</name>
    <name type="common">Chinese soft-hair kiwi</name>
    <dbReference type="NCBI Taxonomy" id="1590841"/>
    <lineage>
        <taxon>Eukaryota</taxon>
        <taxon>Viridiplantae</taxon>
        <taxon>Streptophyta</taxon>
        <taxon>Embryophyta</taxon>
        <taxon>Tracheophyta</taxon>
        <taxon>Spermatophyta</taxon>
        <taxon>Magnoliopsida</taxon>
        <taxon>eudicotyledons</taxon>
        <taxon>Gunneridae</taxon>
        <taxon>Pentapetalae</taxon>
        <taxon>asterids</taxon>
        <taxon>Ericales</taxon>
        <taxon>Actinidiaceae</taxon>
        <taxon>Actinidia</taxon>
    </lineage>
</organism>
<evidence type="ECO:0000250" key="1">
    <source>
        <dbReference type="UniProtKB" id="A0A068BIF1"/>
    </source>
</evidence>
<evidence type="ECO:0000250" key="2">
    <source>
        <dbReference type="UniProtKB" id="Q9FI78"/>
    </source>
</evidence>
<evidence type="ECO:0000305" key="3"/>
<evidence type="ECO:0000312" key="4">
    <source>
        <dbReference type="EMBL" id="PSR93215.1"/>
    </source>
</evidence>
<proteinExistence type="inferred from homology"/>
<protein>
    <recommendedName>
        <fullName evidence="3">Alcohol acyltransferase 9</fullName>
        <shortName evidence="3">AcAT9</shortName>
        <ecNumber evidence="1">2.3.1.268</ecNumber>
    </recommendedName>
</protein>
<keyword id="KW-0012">Acyltransferase</keyword>
<keyword id="KW-1185">Reference proteome</keyword>
<keyword id="KW-0808">Transferase</keyword>
<sequence>MASSVRLVKKPVLVAPVDPTPSTVLSLSSLDSQLFLRFPIEYLLVYASPHGVDRDVTAARVKAALARSLVPYYPLAGRVKTRPDSTGLDVVCQAQGAGLLEAVSDYTASDFQRAPRSVAEWRKLLLVEVFKVVPPLVVQLTWLSDGCVALGIGFSHCVIDGIGSSEFLNLFAELATSRAKLSEFQPKPVWDRQLLNSAGRTNLGTHPEFGRVPDLSGFVTRFAQERLSPTSITFDKTWLKELKNIAMSTSQAGEFPYTSFEVLSGHIWRSWARSLNLPAKQVLKLLFSINIRNRVKPSLPAGYYGNAFVLGCAQTSVKDLTEKGLGYCADLVRGAKERVGDEYAREVVESVSWPRRASPDSVGVLIISQWSRLGLDRVDFGLGRPVHVGPICCDRYCLFLPVRDRMEAVKVMVAVPTSAVDRYENLMRSPYS</sequence>
<reference key="1">
    <citation type="journal article" date="2018" name="BMC Genomics">
        <title>A manually annotated Actinidia chinensis var. chinensis (kiwifruit) genome highlights the challenges associated with draft genomes and gene prediction in plants.</title>
        <authorList>
            <person name="Pilkington S.M."/>
            <person name="Crowhurst R."/>
            <person name="Hilario E."/>
            <person name="Nardozza S."/>
            <person name="Fraser L."/>
            <person name="Peng Y."/>
            <person name="Gunaseelan K."/>
            <person name="Simpson R."/>
            <person name="Tahir J."/>
            <person name="Deroles S.C."/>
            <person name="Templeton K."/>
            <person name="Luo Z."/>
            <person name="Davy M."/>
            <person name="Cheng C."/>
            <person name="McNeilage M."/>
            <person name="Scaglione D."/>
            <person name="Liu Y."/>
            <person name="Zhang Q."/>
            <person name="Datson P."/>
            <person name="De Silva N."/>
            <person name="Gardiner S.E."/>
            <person name="Bassett H."/>
            <person name="Chagne D."/>
            <person name="McCallum J."/>
            <person name="Dzierzon H."/>
            <person name="Deng C."/>
            <person name="Wang Y.Y."/>
            <person name="Barron L."/>
            <person name="Manako K."/>
            <person name="Bowen J."/>
            <person name="Foster T.M."/>
            <person name="Erridge Z.A."/>
            <person name="Tiffin H."/>
            <person name="Waite C.N."/>
            <person name="Davies K.M."/>
            <person name="Grierson E.P."/>
            <person name="Laing W.A."/>
            <person name="Kirk R."/>
            <person name="Chen X."/>
            <person name="Wood M."/>
            <person name="Montefiori M."/>
            <person name="Brummell D.A."/>
            <person name="Schwinn K.E."/>
            <person name="Catanach A."/>
            <person name="Fullerton C."/>
            <person name="Li D."/>
            <person name="Meiyalaghan S."/>
            <person name="Nieuwenhuizen N."/>
            <person name="Read N."/>
            <person name="Prakash R."/>
            <person name="Hunter D."/>
            <person name="Zhang H."/>
            <person name="McKenzie M."/>
            <person name="Knabel M."/>
            <person name="Harris A."/>
            <person name="Allan A.C."/>
            <person name="Gleave A."/>
            <person name="Chen A."/>
            <person name="Janssen B.J."/>
            <person name="Plunkett B."/>
            <person name="Ampomah-Dwamena C."/>
            <person name="Voogd C."/>
            <person name="Leif D."/>
            <person name="Lafferty D."/>
            <person name="Souleyre E.J.F."/>
            <person name="Varkonyi-Gasic E."/>
            <person name="Gambi F."/>
            <person name="Hanley J."/>
            <person name="Yao J.L."/>
            <person name="Cheung J."/>
            <person name="David K.M."/>
            <person name="Warren B."/>
            <person name="Marsh K."/>
            <person name="Snowden K.C."/>
            <person name="Lin-Wang K."/>
            <person name="Brian L."/>
            <person name="Martinez-Sanchez M."/>
            <person name="Wang M."/>
            <person name="Ileperuma N."/>
            <person name="Macnee N."/>
            <person name="Campin R."/>
            <person name="McAtee P."/>
            <person name="Drummond R.S.M."/>
            <person name="Espley R.V."/>
            <person name="Ireland H.S."/>
            <person name="Wu R."/>
            <person name="Atkinson R.G."/>
            <person name="Karunairetnam S."/>
            <person name="Bulley S."/>
            <person name="Chunkath S."/>
            <person name="Hanley Z."/>
            <person name="Storey R."/>
            <person name="Thrimawithana A.H."/>
            <person name="Thomson S."/>
            <person name="David C."/>
            <person name="Testolin R."/>
            <person name="Huang H."/>
            <person name="Hellens R.P."/>
            <person name="Schaffer R.J."/>
        </authorList>
    </citation>
    <scope>NUCLEOTIDE SEQUENCE [LARGE SCALE GENOMIC DNA]</scope>
    <source>
        <strain>cv. Red5</strain>
        <tissue>Leaf</tissue>
    </source>
</reference>
<comment type="function">
    <text evidence="1">Involved in the biosynthesis of volatile esters which confer kiwifruit flavor (By similarity). Alcohol acyl transferase that can use a wide range of alcohols as substrate to produce esters (By similarity). Exhibits acetyl-CoA:alcohol O-acyltransferase activity (By similarity).</text>
</comment>
<comment type="catalytic activity">
    <reaction evidence="1">
        <text>2-(methylsulfanyl)acetyl-CoA + butan-1-ol = butyl 2-(methylsulfanyl)acetate + CoA</text>
        <dbReference type="Rhea" id="RHEA:64672"/>
        <dbReference type="ChEBI" id="CHEBI:28885"/>
        <dbReference type="ChEBI" id="CHEBI:57287"/>
        <dbReference type="ChEBI" id="CHEBI:156076"/>
        <dbReference type="ChEBI" id="CHEBI:156077"/>
    </reaction>
    <physiologicalReaction direction="left-to-right" evidence="1">
        <dbReference type="Rhea" id="RHEA:64673"/>
    </physiologicalReaction>
</comment>
<comment type="catalytic activity">
    <reaction evidence="1">
        <text>ethanol + acetyl-CoA = ethyl acetate + CoA</text>
        <dbReference type="Rhea" id="RHEA:55972"/>
        <dbReference type="ChEBI" id="CHEBI:16236"/>
        <dbReference type="ChEBI" id="CHEBI:27750"/>
        <dbReference type="ChEBI" id="CHEBI:57287"/>
        <dbReference type="ChEBI" id="CHEBI:57288"/>
        <dbReference type="EC" id="2.3.1.268"/>
    </reaction>
    <physiologicalReaction direction="left-to-right" evidence="1">
        <dbReference type="Rhea" id="RHEA:55973"/>
    </physiologicalReaction>
</comment>
<comment type="catalytic activity">
    <reaction evidence="1">
        <text>butan-1-ol + acetyl-CoA = butyl acetate + CoA</text>
        <dbReference type="Rhea" id="RHEA:64632"/>
        <dbReference type="ChEBI" id="CHEBI:28885"/>
        <dbReference type="ChEBI" id="CHEBI:31328"/>
        <dbReference type="ChEBI" id="CHEBI:57287"/>
        <dbReference type="ChEBI" id="CHEBI:57288"/>
    </reaction>
    <physiologicalReaction direction="left-to-right" evidence="1">
        <dbReference type="Rhea" id="RHEA:64633"/>
    </physiologicalReaction>
</comment>
<comment type="catalytic activity">
    <reaction evidence="1">
        <text>butan-1-ol + propanoyl-CoA = butyl propanoate + CoA</text>
        <dbReference type="Rhea" id="RHEA:64644"/>
        <dbReference type="ChEBI" id="CHEBI:28885"/>
        <dbReference type="ChEBI" id="CHEBI:57287"/>
        <dbReference type="ChEBI" id="CHEBI:57392"/>
        <dbReference type="ChEBI" id="CHEBI:89831"/>
    </reaction>
    <physiologicalReaction direction="left-to-right" evidence="1">
        <dbReference type="Rhea" id="RHEA:64645"/>
    </physiologicalReaction>
</comment>
<comment type="similarity">
    <text evidence="3">Belongs to the plant acyltransferase family.</text>
</comment>